<reference key="1">
    <citation type="submission" date="2007-07" db="EMBL/GenBank/DDBJ databases">
        <title>Complete genome sequence of Campylobacter jejuni subsp doylei 269.97 isolated from human blood.</title>
        <authorList>
            <person name="Fouts D.E."/>
            <person name="Mongodin E.F."/>
            <person name="Puiu D."/>
            <person name="Sebastian Y."/>
            <person name="Miller W.G."/>
            <person name="Mandrell R.E."/>
            <person name="Lastovica A.J."/>
            <person name="Nelson K.E."/>
        </authorList>
    </citation>
    <scope>NUCLEOTIDE SEQUENCE [LARGE SCALE GENOMIC DNA]</scope>
    <source>
        <strain>ATCC BAA-1458 / RM4099 / 269.97</strain>
    </source>
</reference>
<organism>
    <name type="scientific">Campylobacter jejuni subsp. doylei (strain ATCC BAA-1458 / RM4099 / 269.97)</name>
    <dbReference type="NCBI Taxonomy" id="360109"/>
    <lineage>
        <taxon>Bacteria</taxon>
        <taxon>Pseudomonadati</taxon>
        <taxon>Campylobacterota</taxon>
        <taxon>Epsilonproteobacteria</taxon>
        <taxon>Campylobacterales</taxon>
        <taxon>Campylobacteraceae</taxon>
        <taxon>Campylobacter</taxon>
    </lineage>
</organism>
<sequence>MTQIIPALDLIDGEVVRLVKGDYKQKKVYKYNPLKKFKEYEKAGAKELHLVDLTGAKDPSKRQLVLIEKLAKEVSVNLQVGGGIRSKEEVKALLDCGVKRVVIGSMAIKDATLCLEILKKFGSEAIVLALDTILKEDYVVAVNAWQEASDKKLMEVLDFYSNKGLKHILCTDISKDGTMQGVNVRLYKLIHEIFPKICIQASGGVASLKDLENLKGICSGVIVGKALLDGVFSVEEGIRCLQNA</sequence>
<proteinExistence type="inferred from homology"/>
<protein>
    <recommendedName>
        <fullName evidence="1">1-(5-phosphoribosyl)-5-[(5-phosphoribosylamino)methylideneamino] imidazole-4-carboxamide isomerase</fullName>
        <ecNumber evidence="1">5.3.1.16</ecNumber>
    </recommendedName>
    <alternativeName>
        <fullName evidence="1">Phosphoribosylformimino-5-aminoimidazole carboxamide ribotide isomerase</fullName>
    </alternativeName>
</protein>
<evidence type="ECO:0000255" key="1">
    <source>
        <dbReference type="HAMAP-Rule" id="MF_01014"/>
    </source>
</evidence>
<dbReference type="EC" id="5.3.1.16" evidence="1"/>
<dbReference type="EMBL" id="CP000768">
    <property type="protein sequence ID" value="ABS43305.1"/>
    <property type="molecule type" value="Genomic_DNA"/>
</dbReference>
<dbReference type="SMR" id="A7H5V3"/>
<dbReference type="KEGG" id="cjd:JJD26997_1956"/>
<dbReference type="HOGENOM" id="CLU_048577_1_2_7"/>
<dbReference type="UniPathway" id="UPA00031">
    <property type="reaction ID" value="UER00009"/>
</dbReference>
<dbReference type="Proteomes" id="UP000002302">
    <property type="component" value="Chromosome"/>
</dbReference>
<dbReference type="GO" id="GO:0005737">
    <property type="term" value="C:cytoplasm"/>
    <property type="evidence" value="ECO:0007669"/>
    <property type="project" value="UniProtKB-SubCell"/>
</dbReference>
<dbReference type="GO" id="GO:0003949">
    <property type="term" value="F:1-(5-phosphoribosyl)-5-[(5-phosphoribosylamino)methylideneamino]imidazole-4-carboxamide isomerase activity"/>
    <property type="evidence" value="ECO:0007669"/>
    <property type="project" value="UniProtKB-UniRule"/>
</dbReference>
<dbReference type="GO" id="GO:0000105">
    <property type="term" value="P:L-histidine biosynthetic process"/>
    <property type="evidence" value="ECO:0007669"/>
    <property type="project" value="UniProtKB-UniRule"/>
</dbReference>
<dbReference type="GO" id="GO:0000162">
    <property type="term" value="P:L-tryptophan biosynthetic process"/>
    <property type="evidence" value="ECO:0007669"/>
    <property type="project" value="TreeGrafter"/>
</dbReference>
<dbReference type="CDD" id="cd04732">
    <property type="entry name" value="HisA"/>
    <property type="match status" value="1"/>
</dbReference>
<dbReference type="FunFam" id="3.20.20.70:FF:000009">
    <property type="entry name" value="1-(5-phosphoribosyl)-5-[(5-phosphoribosylamino)methylideneamino] imidazole-4-carboxamide isomerase"/>
    <property type="match status" value="1"/>
</dbReference>
<dbReference type="Gene3D" id="3.20.20.70">
    <property type="entry name" value="Aldolase class I"/>
    <property type="match status" value="1"/>
</dbReference>
<dbReference type="HAMAP" id="MF_01014">
    <property type="entry name" value="HisA"/>
    <property type="match status" value="1"/>
</dbReference>
<dbReference type="InterPro" id="IPR013785">
    <property type="entry name" value="Aldolase_TIM"/>
</dbReference>
<dbReference type="InterPro" id="IPR006062">
    <property type="entry name" value="His_biosynth"/>
</dbReference>
<dbReference type="InterPro" id="IPR006063">
    <property type="entry name" value="HisA_bact_arch"/>
</dbReference>
<dbReference type="InterPro" id="IPR044524">
    <property type="entry name" value="Isoase_HisA-like"/>
</dbReference>
<dbReference type="InterPro" id="IPR023016">
    <property type="entry name" value="Isoase_HisA-like_bact"/>
</dbReference>
<dbReference type="InterPro" id="IPR011060">
    <property type="entry name" value="RibuloseP-bd_barrel"/>
</dbReference>
<dbReference type="NCBIfam" id="TIGR00007">
    <property type="entry name" value="1-(5-phosphoribosyl)-5-[(5-phosphoribosylamino)methylideneamino]imidazole-4-carboxamide isomerase"/>
    <property type="match status" value="1"/>
</dbReference>
<dbReference type="PANTHER" id="PTHR43090">
    <property type="entry name" value="1-(5-PHOSPHORIBOSYL)-5-[(5-PHOSPHORIBOSYLAMINO)METHYLIDENEAMINO] IMIDAZOLE-4-CARBOXAMIDE ISOMERASE"/>
    <property type="match status" value="1"/>
</dbReference>
<dbReference type="PANTHER" id="PTHR43090:SF2">
    <property type="entry name" value="1-(5-PHOSPHORIBOSYL)-5-[(5-PHOSPHORIBOSYLAMINO)METHYLIDENEAMINO] IMIDAZOLE-4-CARBOXAMIDE ISOMERASE"/>
    <property type="match status" value="1"/>
</dbReference>
<dbReference type="Pfam" id="PF00977">
    <property type="entry name" value="His_biosynth"/>
    <property type="match status" value="1"/>
</dbReference>
<dbReference type="SUPFAM" id="SSF51366">
    <property type="entry name" value="Ribulose-phoshate binding barrel"/>
    <property type="match status" value="1"/>
</dbReference>
<gene>
    <name evidence="1" type="primary">hisA</name>
    <name type="ordered locus">JJD26997_1956</name>
</gene>
<name>HIS4_CAMJD</name>
<keyword id="KW-0028">Amino-acid biosynthesis</keyword>
<keyword id="KW-0963">Cytoplasm</keyword>
<keyword id="KW-0368">Histidine biosynthesis</keyword>
<keyword id="KW-0413">Isomerase</keyword>
<feature type="chain" id="PRO_1000063199" description="1-(5-phosphoribosyl)-5-[(5-phosphoribosylamino)methylideneamino] imidazole-4-carboxamide isomerase">
    <location>
        <begin position="1"/>
        <end position="244"/>
    </location>
</feature>
<feature type="active site" description="Proton acceptor" evidence="1">
    <location>
        <position position="9"/>
    </location>
</feature>
<feature type="active site" description="Proton donor" evidence="1">
    <location>
        <position position="131"/>
    </location>
</feature>
<comment type="catalytic activity">
    <reaction evidence="1">
        <text>1-(5-phospho-beta-D-ribosyl)-5-[(5-phospho-beta-D-ribosylamino)methylideneamino]imidazole-4-carboxamide = 5-[(5-phospho-1-deoxy-D-ribulos-1-ylimino)methylamino]-1-(5-phospho-beta-D-ribosyl)imidazole-4-carboxamide</text>
        <dbReference type="Rhea" id="RHEA:15469"/>
        <dbReference type="ChEBI" id="CHEBI:58435"/>
        <dbReference type="ChEBI" id="CHEBI:58525"/>
        <dbReference type="EC" id="5.3.1.16"/>
    </reaction>
</comment>
<comment type="pathway">
    <text evidence="1">Amino-acid biosynthesis; L-histidine biosynthesis; L-histidine from 5-phospho-alpha-D-ribose 1-diphosphate: step 4/9.</text>
</comment>
<comment type="subcellular location">
    <subcellularLocation>
        <location evidence="1">Cytoplasm</location>
    </subcellularLocation>
</comment>
<comment type="similarity">
    <text evidence="1">Belongs to the HisA/HisF family.</text>
</comment>
<accession>A7H5V3</accession>